<protein>
    <recommendedName>
        <fullName>Endoplasmic reticulum aminopeptidase 1</fullName>
        <ecNumber>3.4.11.-</ecNumber>
    </recommendedName>
    <alternativeName>
        <fullName>ARTS-1</fullName>
    </alternativeName>
    <alternativeName>
        <fullName>Adipocyte-derived leucine aminopeptidase</fullName>
        <shortName>A-LAP</shortName>
    </alternativeName>
    <alternativeName>
        <fullName>Aminopeptidase PILS</fullName>
    </alternativeName>
    <alternativeName>
        <fullName>Puromycin-insensitive leucyl-specific aminopeptidase</fullName>
        <shortName>PILS-AP</shortName>
    </alternativeName>
    <alternativeName>
        <fullName>Type 1 tumor necrosis factor receptor shedding aminopeptidase regulator</fullName>
    </alternativeName>
</protein>
<sequence>MVFLPLKWSLATMSFLLSSLLALLTVSTPSWCQSTEASPKRSDGTPFPWNKIRLPEYVIPVHYDLLIHANLTTLTFWGTTKVEITASQPTSTIILHSHHLQISRATLRKGAGERLSEEPLQVLEHPRQEQIALLAPEPLLVGLPYTVVIHYAGNLSETFHGFYKSTYRTKEGELRILASTQFEPTAARMAFPCFDEPAFKASFSIKIRREPRHLAISNMPLVKSVTVAEGLIEDHFDVTVKMSTYLVAFIISDFESVSKITKSGVKVSVYAVPDKINQADYALDAAVTLLEFYEDYFSIPYPLPKQDLAAIPDFQSGAMENWGLTTYRESALLFDAEKSSASSKLGITMTVAHELAHQWFGNLVTMEWWNDLWLNEGFAKFMEFVSVSVTHPELKVGDYFFGKCFDAMEVDALNSSHPVSTPVENPAQIREMFDDVSYDKGACILNMLREYLSADAFKSGIVQYLQKHSYKNTKNEDLWDSMASICPTDGVKGMDGFCSRSQHSSSSSHWHQEGVDVKTMMNTWTLQKGFPLITITVRGRNVHMKQEHYMKGSDGAPDTGYLWHVPLTFITSKSDMVHRFLLKTKTDVLILPEEVEWIKFNVGMNGYYIVHYEDDGWDSLTGLLKGTHTAVSSNDRASLINNAFQLVSIGKLSIEKALDLSLYLKHETEIMPVFQGLNELIPMYKLMEKRDMNEVETQFKAFLIRLLRDLIDKQTWTDEGSVSERMLRSQLLLLACVHNYQPCVQRAEGYFRKWKESNGNLSLPVDVTLAVFAVGAQSTEGWDFLYSKYQFSLSSTEKSQIEFALCRTQNKEKLQWLLDESFKGDKIKTQEFPQILTLIGRNPVGYPLAWQFLRKNWNKLVQKFELGSSSIAHMVMGTTNQFSTRTRLEEVKGFFSSLKENGSQLRCVQQTIETIEENIGWMDKNFDKIRVWLQSEKLERM</sequence>
<organism>
    <name type="scientific">Homo sapiens</name>
    <name type="common">Human</name>
    <dbReference type="NCBI Taxonomy" id="9606"/>
    <lineage>
        <taxon>Eukaryota</taxon>
        <taxon>Metazoa</taxon>
        <taxon>Chordata</taxon>
        <taxon>Craniata</taxon>
        <taxon>Vertebrata</taxon>
        <taxon>Euteleostomi</taxon>
        <taxon>Mammalia</taxon>
        <taxon>Eutheria</taxon>
        <taxon>Euarchontoglires</taxon>
        <taxon>Primates</taxon>
        <taxon>Haplorrhini</taxon>
        <taxon>Catarrhini</taxon>
        <taxon>Hominidae</taxon>
        <taxon>Homo</taxon>
    </lineage>
</organism>
<proteinExistence type="evidence at protein level"/>
<dbReference type="EC" id="3.4.11.-"/>
<dbReference type="EMBL" id="AF106037">
    <property type="protein sequence ID" value="AAF07395.1"/>
    <property type="molecule type" value="mRNA"/>
</dbReference>
<dbReference type="EMBL" id="AY028806">
    <property type="protein sequence ID" value="AAK37777.1"/>
    <property type="molecule type" value="mRNA"/>
</dbReference>
<dbReference type="EMBL" id="AY028807">
    <property type="protein sequence ID" value="AAK37778.1"/>
    <property type="molecule type" value="mRNA"/>
</dbReference>
<dbReference type="EMBL" id="AF183569">
    <property type="protein sequence ID" value="AAF20384.1"/>
    <property type="molecule type" value="mRNA"/>
</dbReference>
<dbReference type="EMBL" id="AF222340">
    <property type="protein sequence ID" value="AAF34664.1"/>
    <property type="molecule type" value="mRNA"/>
</dbReference>
<dbReference type="EMBL" id="AB011097">
    <property type="protein sequence ID" value="BAA25451.2"/>
    <property type="status" value="ALT_INIT"/>
    <property type="molecule type" value="mRNA"/>
</dbReference>
<dbReference type="EMBL" id="AY358590">
    <property type="protein sequence ID" value="AAQ88953.1"/>
    <property type="molecule type" value="mRNA"/>
</dbReference>
<dbReference type="EMBL" id="BC030775">
    <property type="protein sequence ID" value="AAH30775.1"/>
    <property type="molecule type" value="mRNA"/>
</dbReference>
<dbReference type="CCDS" id="CCDS4085.1">
    <molecule id="Q9NZ08-2"/>
</dbReference>
<dbReference type="CCDS" id="CCDS47250.1">
    <molecule id="Q9NZ08-1"/>
</dbReference>
<dbReference type="RefSeq" id="NP_001035548.1">
    <molecule id="Q9NZ08-1"/>
    <property type="nucleotide sequence ID" value="NM_001040458.3"/>
</dbReference>
<dbReference type="RefSeq" id="NP_001185470.1">
    <molecule id="Q9NZ08-1"/>
    <property type="nucleotide sequence ID" value="NM_001198541.3"/>
</dbReference>
<dbReference type="RefSeq" id="NP_001336173.1">
    <molecule id="Q9NZ08-2"/>
    <property type="nucleotide sequence ID" value="NM_001349244.2"/>
</dbReference>
<dbReference type="RefSeq" id="NP_057526.3">
    <molecule id="Q9NZ08-2"/>
    <property type="nucleotide sequence ID" value="NM_016442.3"/>
</dbReference>
<dbReference type="RefSeq" id="XP_011541788.1">
    <molecule id="Q9NZ08-1"/>
    <property type="nucleotide sequence ID" value="XM_011543486.4"/>
</dbReference>
<dbReference type="RefSeq" id="XP_016865071.1">
    <property type="nucleotide sequence ID" value="XM_017009582.1"/>
</dbReference>
<dbReference type="RefSeq" id="XP_047273264.1">
    <molecule id="Q9NZ08-2"/>
    <property type="nucleotide sequence ID" value="XM_047417308.1"/>
</dbReference>
<dbReference type="RefSeq" id="XP_047273265.1">
    <molecule id="Q9NZ08-2"/>
    <property type="nucleotide sequence ID" value="XM_047417309.1"/>
</dbReference>
<dbReference type="RefSeq" id="XP_047273266.1">
    <molecule id="Q9NZ08-2"/>
    <property type="nucleotide sequence ID" value="XM_047417310.1"/>
</dbReference>
<dbReference type="PDB" id="2YD0">
    <property type="method" value="X-ray"/>
    <property type="resolution" value="2.70 A"/>
    <property type="chains" value="A=46-940"/>
</dbReference>
<dbReference type="PDB" id="3MDJ">
    <property type="method" value="X-ray"/>
    <property type="resolution" value="2.95 A"/>
    <property type="chains" value="A/B/C=37-939"/>
</dbReference>
<dbReference type="PDB" id="3QNF">
    <property type="method" value="X-ray"/>
    <property type="resolution" value="3.00 A"/>
    <property type="chains" value="A/B/C=1-941"/>
</dbReference>
<dbReference type="PDB" id="3RJO">
    <property type="method" value="X-ray"/>
    <property type="resolution" value="2.30 A"/>
    <property type="chains" value="A=529-941"/>
</dbReference>
<dbReference type="PDB" id="5J5E">
    <property type="method" value="X-ray"/>
    <property type="resolution" value="2.80 A"/>
    <property type="chains" value="A=529-941"/>
</dbReference>
<dbReference type="PDB" id="6M8P">
    <property type="method" value="X-ray"/>
    <property type="resolution" value="3.31 A"/>
    <property type="chains" value="A/B/C/D/E/F/G/H/I/J/K/L/M/N/O/P/Q/R/S/T/U/V=33-485, A/B/C/D/E/F/G/H/I/J/K/L/M/N/O/P/Q/R/S/T/U/V=514-940"/>
</dbReference>
<dbReference type="PDB" id="6MGQ">
    <property type="method" value="X-ray"/>
    <property type="resolution" value="2.92 A"/>
    <property type="chains" value="A/B/C=33-939"/>
</dbReference>
<dbReference type="PDB" id="6Q4R">
    <property type="method" value="X-ray"/>
    <property type="resolution" value="1.60 A"/>
    <property type="chains" value="A=1-485, A=514-937"/>
</dbReference>
<dbReference type="PDB" id="6RQX">
    <property type="method" value="X-ray"/>
    <property type="resolution" value="1.68 A"/>
    <property type="chains" value="A=1-938"/>
</dbReference>
<dbReference type="PDB" id="6RYF">
    <property type="method" value="X-ray"/>
    <property type="resolution" value="1.72 A"/>
    <property type="chains" value="A=46-938"/>
</dbReference>
<dbReference type="PDB" id="6T6R">
    <property type="method" value="X-ray"/>
    <property type="resolution" value="1.67 A"/>
    <property type="chains" value="A=1-941"/>
</dbReference>
<dbReference type="PDB" id="7MWB">
    <property type="method" value="X-ray"/>
    <property type="resolution" value="3.20 A"/>
    <property type="chains" value="A/B/C/D=529-941"/>
</dbReference>
<dbReference type="PDB" id="7MWC">
    <property type="method" value="X-ray"/>
    <property type="resolution" value="3.00 A"/>
    <property type="chains" value="A/B/C/D=529-941"/>
</dbReference>
<dbReference type="PDB" id="7Z28">
    <property type="method" value="X-ray"/>
    <property type="resolution" value="1.55 A"/>
    <property type="chains" value="A=45-936"/>
</dbReference>
<dbReference type="PDB" id="9GJN">
    <property type="method" value="X-ray"/>
    <property type="resolution" value="1.72 A"/>
    <property type="chains" value="A/B=1-485, A/B=514-941"/>
</dbReference>
<dbReference type="PDB" id="9GJS">
    <property type="method" value="X-ray"/>
    <property type="resolution" value="1.35 A"/>
    <property type="chains" value="A=1-485, A=514-941"/>
</dbReference>
<dbReference type="PDB" id="9GK6">
    <property type="method" value="X-ray"/>
    <property type="resolution" value="1.33 A"/>
    <property type="chains" value="A=1-485, A=514-941"/>
</dbReference>
<dbReference type="PDB" id="9GKE">
    <property type="method" value="X-ray"/>
    <property type="resolution" value="1.37 A"/>
    <property type="chains" value="A=1-485, A=514-941"/>
</dbReference>
<dbReference type="PDBsum" id="2YD0"/>
<dbReference type="PDBsum" id="3MDJ"/>
<dbReference type="PDBsum" id="3QNF"/>
<dbReference type="PDBsum" id="3RJO"/>
<dbReference type="PDBsum" id="5J5E"/>
<dbReference type="PDBsum" id="6M8P"/>
<dbReference type="PDBsum" id="6MGQ"/>
<dbReference type="PDBsum" id="6Q4R"/>
<dbReference type="PDBsum" id="6RQX"/>
<dbReference type="PDBsum" id="6RYF"/>
<dbReference type="PDBsum" id="6T6R"/>
<dbReference type="PDBsum" id="7MWB"/>
<dbReference type="PDBsum" id="7MWC"/>
<dbReference type="PDBsum" id="7Z28"/>
<dbReference type="PDBsum" id="9GJN"/>
<dbReference type="PDBsum" id="9GJS"/>
<dbReference type="PDBsum" id="9GK6"/>
<dbReference type="PDBsum" id="9GKE"/>
<dbReference type="SMR" id="Q9NZ08"/>
<dbReference type="BioGRID" id="119713">
    <property type="interactions" value="85"/>
</dbReference>
<dbReference type="ComplexPortal" id="CPX-8736">
    <property type="entry name" value="ERAP1-ERAP2 endoplasmic reticulum aminopeptidase complex"/>
</dbReference>
<dbReference type="CORUM" id="Q9NZ08"/>
<dbReference type="FunCoup" id="Q9NZ08">
    <property type="interactions" value="845"/>
</dbReference>
<dbReference type="IntAct" id="Q9NZ08">
    <property type="interactions" value="40"/>
</dbReference>
<dbReference type="MINT" id="Q9NZ08"/>
<dbReference type="STRING" id="9606.ENSP00000296754"/>
<dbReference type="BindingDB" id="Q9NZ08"/>
<dbReference type="ChEMBL" id="CHEMBL5939"/>
<dbReference type="DrugCentral" id="Q9NZ08"/>
<dbReference type="GuidetoPHARMACOLOGY" id="1566"/>
<dbReference type="MEROPS" id="M01.018"/>
<dbReference type="GlyConnect" id="1203">
    <property type="glycosylation" value="2 N-Linked glycans (1 site)"/>
</dbReference>
<dbReference type="GlyCosmos" id="Q9NZ08">
    <property type="glycosylation" value="5 sites, 2 glycans"/>
</dbReference>
<dbReference type="GlyGen" id="Q9NZ08">
    <property type="glycosylation" value="9 sites, 31 N-linked glycans (1 site), 1 O-linked glycan (3 sites)"/>
</dbReference>
<dbReference type="iPTMnet" id="Q9NZ08"/>
<dbReference type="MetOSite" id="Q9NZ08"/>
<dbReference type="PhosphoSitePlus" id="Q9NZ08"/>
<dbReference type="SwissPalm" id="Q9NZ08"/>
<dbReference type="BioMuta" id="ERAP1"/>
<dbReference type="DMDM" id="158937334"/>
<dbReference type="jPOST" id="Q9NZ08"/>
<dbReference type="MassIVE" id="Q9NZ08"/>
<dbReference type="PaxDb" id="9606-ENSP00000296754"/>
<dbReference type="PeptideAtlas" id="Q9NZ08"/>
<dbReference type="ProteomicsDB" id="83312">
    <molecule id="Q9NZ08-1"/>
</dbReference>
<dbReference type="ProteomicsDB" id="83313">
    <molecule id="Q9NZ08-2"/>
</dbReference>
<dbReference type="Pumba" id="Q9NZ08"/>
<dbReference type="Antibodypedia" id="25075">
    <property type="antibodies" value="377 antibodies from 36 providers"/>
</dbReference>
<dbReference type="DNASU" id="51752"/>
<dbReference type="Ensembl" id="ENST00000296754.7">
    <molecule id="Q9NZ08-2"/>
    <property type="protein sequence ID" value="ENSP00000296754.3"/>
    <property type="gene ID" value="ENSG00000164307.13"/>
</dbReference>
<dbReference type="Ensembl" id="ENST00000443439.7">
    <molecule id="Q9NZ08-1"/>
    <property type="protein sequence ID" value="ENSP00000406304.2"/>
    <property type="gene ID" value="ENSG00000164307.13"/>
</dbReference>
<dbReference type="GeneID" id="51752"/>
<dbReference type="KEGG" id="hsa:51752"/>
<dbReference type="MANE-Select" id="ENST00000443439.7">
    <property type="protein sequence ID" value="ENSP00000406304.2"/>
    <property type="RefSeq nucleotide sequence ID" value="NM_001040458.3"/>
    <property type="RefSeq protein sequence ID" value="NP_001035548.1"/>
</dbReference>
<dbReference type="UCSC" id="uc003kml.4">
    <molecule id="Q9NZ08-1"/>
    <property type="organism name" value="human"/>
</dbReference>
<dbReference type="AGR" id="HGNC:18173"/>
<dbReference type="CTD" id="51752"/>
<dbReference type="DisGeNET" id="51752"/>
<dbReference type="GeneCards" id="ERAP1"/>
<dbReference type="HGNC" id="HGNC:18173">
    <property type="gene designation" value="ERAP1"/>
</dbReference>
<dbReference type="HPA" id="ENSG00000164307">
    <property type="expression patterns" value="Low tissue specificity"/>
</dbReference>
<dbReference type="MalaCards" id="ERAP1"/>
<dbReference type="MIM" id="606832">
    <property type="type" value="gene"/>
</dbReference>
<dbReference type="neXtProt" id="NX_Q9NZ08"/>
<dbReference type="OpenTargets" id="ENSG00000164307"/>
<dbReference type="Orphanet" id="117">
    <property type="disease" value="Behcet disease"/>
</dbReference>
<dbReference type="PharmGKB" id="PA162385163"/>
<dbReference type="VEuPathDB" id="HostDB:ENSG00000164307"/>
<dbReference type="eggNOG" id="KOG1046">
    <property type="taxonomic scope" value="Eukaryota"/>
</dbReference>
<dbReference type="GeneTree" id="ENSGT00940000159086"/>
<dbReference type="HOGENOM" id="CLU_003705_2_1_1"/>
<dbReference type="InParanoid" id="Q9NZ08"/>
<dbReference type="OMA" id="NGVCIRN"/>
<dbReference type="OrthoDB" id="10031169at2759"/>
<dbReference type="PAN-GO" id="Q9NZ08">
    <property type="GO annotations" value="9 GO annotations based on evolutionary models"/>
</dbReference>
<dbReference type="PhylomeDB" id="Q9NZ08"/>
<dbReference type="TreeFam" id="TF300395"/>
<dbReference type="BRENDA" id="3.4.11.1">
    <property type="organism ID" value="2681"/>
</dbReference>
<dbReference type="BRENDA" id="3.4.11.22">
    <property type="organism ID" value="2681"/>
</dbReference>
<dbReference type="PathwayCommons" id="Q9NZ08"/>
<dbReference type="Reactome" id="R-HSA-983170">
    <property type="pathway name" value="Antigen Presentation: Folding, assembly and peptide loading of class I MHC"/>
</dbReference>
<dbReference type="SignaLink" id="Q9NZ08"/>
<dbReference type="SIGNOR" id="Q9NZ08"/>
<dbReference type="BioGRID-ORCS" id="51752">
    <property type="hits" value="17 hits in 1152 CRISPR screens"/>
</dbReference>
<dbReference type="ChiTaRS" id="ERAP1">
    <property type="organism name" value="human"/>
</dbReference>
<dbReference type="EvolutionaryTrace" id="Q9NZ08"/>
<dbReference type="GeneWiki" id="ARTS-1"/>
<dbReference type="GenomeRNAi" id="51752"/>
<dbReference type="Pharos" id="Q9NZ08">
    <property type="development level" value="Tchem"/>
</dbReference>
<dbReference type="PRO" id="PR:Q9NZ08"/>
<dbReference type="Proteomes" id="UP000005640">
    <property type="component" value="Chromosome 5"/>
</dbReference>
<dbReference type="RNAct" id="Q9NZ08">
    <property type="molecule type" value="protein"/>
</dbReference>
<dbReference type="Bgee" id="ENSG00000164307">
    <property type="expression patterns" value="Expressed in jejunal mucosa and 208 other cell types or tissues"/>
</dbReference>
<dbReference type="ExpressionAtlas" id="Q9NZ08">
    <property type="expression patterns" value="baseline and differential"/>
</dbReference>
<dbReference type="GO" id="GO:0005737">
    <property type="term" value="C:cytoplasm"/>
    <property type="evidence" value="ECO:0000318"/>
    <property type="project" value="GO_Central"/>
</dbReference>
<dbReference type="GO" id="GO:0005829">
    <property type="term" value="C:cytosol"/>
    <property type="evidence" value="ECO:0000303"/>
    <property type="project" value="UniProtKB"/>
</dbReference>
<dbReference type="GO" id="GO:0005783">
    <property type="term" value="C:endoplasmic reticulum"/>
    <property type="evidence" value="ECO:0000303"/>
    <property type="project" value="UniProtKB"/>
</dbReference>
<dbReference type="GO" id="GO:0005788">
    <property type="term" value="C:endoplasmic reticulum lumen"/>
    <property type="evidence" value="ECO:0000304"/>
    <property type="project" value="HGNC-UCL"/>
</dbReference>
<dbReference type="GO" id="GO:0005789">
    <property type="term" value="C:endoplasmic reticulum membrane"/>
    <property type="evidence" value="ECO:0007669"/>
    <property type="project" value="UniProtKB-SubCell"/>
</dbReference>
<dbReference type="GO" id="GO:0070062">
    <property type="term" value="C:extracellular exosome"/>
    <property type="evidence" value="ECO:0007005"/>
    <property type="project" value="UniProtKB"/>
</dbReference>
<dbReference type="GO" id="GO:0005576">
    <property type="term" value="C:extracellular region"/>
    <property type="evidence" value="ECO:0000314"/>
    <property type="project" value="UniProtKB"/>
</dbReference>
<dbReference type="GO" id="GO:0005615">
    <property type="term" value="C:extracellular space"/>
    <property type="evidence" value="ECO:0007005"/>
    <property type="project" value="UniProtKB"/>
</dbReference>
<dbReference type="GO" id="GO:0016020">
    <property type="term" value="C:membrane"/>
    <property type="evidence" value="ECO:0007005"/>
    <property type="project" value="UniProtKB"/>
</dbReference>
<dbReference type="GO" id="GO:0004177">
    <property type="term" value="F:aminopeptidase activity"/>
    <property type="evidence" value="ECO:0000314"/>
    <property type="project" value="UniProtKB"/>
</dbReference>
<dbReference type="GO" id="GO:0004175">
    <property type="term" value="F:endopeptidase activity"/>
    <property type="evidence" value="ECO:0000269"/>
    <property type="project" value="Reactome"/>
</dbReference>
<dbReference type="GO" id="GO:0005151">
    <property type="term" value="F:interleukin-1, type II receptor binding"/>
    <property type="evidence" value="ECO:0000304"/>
    <property type="project" value="HGNC-UCL"/>
</dbReference>
<dbReference type="GO" id="GO:0005138">
    <property type="term" value="F:interleukin-6 receptor binding"/>
    <property type="evidence" value="ECO:0000353"/>
    <property type="project" value="UniProtKB"/>
</dbReference>
<dbReference type="GO" id="GO:0070006">
    <property type="term" value="F:metalloaminopeptidase activity"/>
    <property type="evidence" value="ECO:0000318"/>
    <property type="project" value="GO_Central"/>
</dbReference>
<dbReference type="GO" id="GO:0008235">
    <property type="term" value="F:metalloexopeptidase activity"/>
    <property type="evidence" value="ECO:0000314"/>
    <property type="project" value="UniProtKB"/>
</dbReference>
<dbReference type="GO" id="GO:0042277">
    <property type="term" value="F:peptide binding"/>
    <property type="evidence" value="ECO:0000318"/>
    <property type="project" value="GO_Central"/>
</dbReference>
<dbReference type="GO" id="GO:0008270">
    <property type="term" value="F:zinc ion binding"/>
    <property type="evidence" value="ECO:0000318"/>
    <property type="project" value="GO_Central"/>
</dbReference>
<dbReference type="GO" id="GO:0002250">
    <property type="term" value="P:adaptive immune response"/>
    <property type="evidence" value="ECO:0007669"/>
    <property type="project" value="UniProtKB-KW"/>
</dbReference>
<dbReference type="GO" id="GO:0001525">
    <property type="term" value="P:angiogenesis"/>
    <property type="evidence" value="ECO:0000304"/>
    <property type="project" value="HGNC-UCL"/>
</dbReference>
<dbReference type="GO" id="GO:0019885">
    <property type="term" value="P:antigen processing and presentation of endogenous peptide antigen via MHC class I"/>
    <property type="evidence" value="ECO:0000304"/>
    <property type="project" value="HGNC-UCL"/>
</dbReference>
<dbReference type="GO" id="GO:0002474">
    <property type="term" value="P:antigen processing and presentation of peptide antigen via MHC class I"/>
    <property type="evidence" value="ECO:0000304"/>
    <property type="project" value="Reactome"/>
</dbReference>
<dbReference type="GO" id="GO:0045444">
    <property type="term" value="P:fat cell differentiation"/>
    <property type="evidence" value="ECO:0000303"/>
    <property type="project" value="UniProtKB"/>
</dbReference>
<dbReference type="GO" id="GO:0006509">
    <property type="term" value="P:membrane protein ectodomain proteolysis"/>
    <property type="evidence" value="ECO:0000314"/>
    <property type="project" value="UniProtKB"/>
</dbReference>
<dbReference type="GO" id="GO:0043171">
    <property type="term" value="P:peptide catabolic process"/>
    <property type="evidence" value="ECO:0000318"/>
    <property type="project" value="GO_Central"/>
</dbReference>
<dbReference type="GO" id="GO:0045766">
    <property type="term" value="P:positive regulation of angiogenesis"/>
    <property type="evidence" value="ECO:0007669"/>
    <property type="project" value="Ensembl"/>
</dbReference>
<dbReference type="GO" id="GO:0006508">
    <property type="term" value="P:proteolysis"/>
    <property type="evidence" value="ECO:0000318"/>
    <property type="project" value="GO_Central"/>
</dbReference>
<dbReference type="GO" id="GO:0008217">
    <property type="term" value="P:regulation of blood pressure"/>
    <property type="evidence" value="ECO:0000304"/>
    <property type="project" value="HGNC-UCL"/>
</dbReference>
<dbReference type="GO" id="GO:0045088">
    <property type="term" value="P:regulation of innate immune response"/>
    <property type="evidence" value="ECO:0000303"/>
    <property type="project" value="UniProtKB"/>
</dbReference>
<dbReference type="GO" id="GO:0009617">
    <property type="term" value="P:response to bacterium"/>
    <property type="evidence" value="ECO:0000303"/>
    <property type="project" value="BHF-UCL"/>
</dbReference>
<dbReference type="CDD" id="cd09601">
    <property type="entry name" value="M1_APN-Q_like"/>
    <property type="match status" value="1"/>
</dbReference>
<dbReference type="FunFam" id="1.10.390.10:FF:000007">
    <property type="entry name" value="Aminopeptidase"/>
    <property type="match status" value="1"/>
</dbReference>
<dbReference type="FunFam" id="1.25.50.20:FF:000003">
    <property type="entry name" value="Leucyl-cystinyl aminopeptidase"/>
    <property type="match status" value="1"/>
</dbReference>
<dbReference type="FunFam" id="2.60.40.1730:FF:000001">
    <property type="entry name" value="Leucyl-cystinyl aminopeptidase"/>
    <property type="match status" value="1"/>
</dbReference>
<dbReference type="FunFam" id="2.60.40.1910:FF:000001">
    <property type="entry name" value="Leucyl-cystinyl aminopeptidase"/>
    <property type="match status" value="1"/>
</dbReference>
<dbReference type="Gene3D" id="1.25.50.20">
    <property type="match status" value="1"/>
</dbReference>
<dbReference type="Gene3D" id="2.60.40.1910">
    <property type="match status" value="1"/>
</dbReference>
<dbReference type="Gene3D" id="1.10.390.10">
    <property type="entry name" value="Neutral Protease Domain 2"/>
    <property type="match status" value="1"/>
</dbReference>
<dbReference type="Gene3D" id="2.60.40.1730">
    <property type="entry name" value="tricorn interacting facor f3 domain"/>
    <property type="match status" value="1"/>
</dbReference>
<dbReference type="InterPro" id="IPR045357">
    <property type="entry name" value="Aminopeptidase_N-like_N"/>
</dbReference>
<dbReference type="InterPro" id="IPR042097">
    <property type="entry name" value="Aminopeptidase_N-like_N_sf"/>
</dbReference>
<dbReference type="InterPro" id="IPR024571">
    <property type="entry name" value="ERAP1-like_C_dom"/>
</dbReference>
<dbReference type="InterPro" id="IPR034016">
    <property type="entry name" value="M1_APN-typ"/>
</dbReference>
<dbReference type="InterPro" id="IPR001930">
    <property type="entry name" value="Peptidase_M1"/>
</dbReference>
<dbReference type="InterPro" id="IPR050344">
    <property type="entry name" value="Peptidase_M1_aminopeptidases"/>
</dbReference>
<dbReference type="InterPro" id="IPR014782">
    <property type="entry name" value="Peptidase_M1_dom"/>
</dbReference>
<dbReference type="InterPro" id="IPR027268">
    <property type="entry name" value="Peptidase_M4/M1_CTD_sf"/>
</dbReference>
<dbReference type="PANTHER" id="PTHR11533:SF156">
    <property type="entry name" value="ENDOPLASMIC RETICULUM AMINOPEPTIDASE 1"/>
    <property type="match status" value="1"/>
</dbReference>
<dbReference type="PANTHER" id="PTHR11533">
    <property type="entry name" value="PROTEASE M1 ZINC METALLOPROTEASE"/>
    <property type="match status" value="1"/>
</dbReference>
<dbReference type="Pfam" id="PF11838">
    <property type="entry name" value="ERAP1_C"/>
    <property type="match status" value="1"/>
</dbReference>
<dbReference type="Pfam" id="PF01433">
    <property type="entry name" value="Peptidase_M1"/>
    <property type="match status" value="1"/>
</dbReference>
<dbReference type="Pfam" id="PF17900">
    <property type="entry name" value="Peptidase_M1_N"/>
    <property type="match status" value="1"/>
</dbReference>
<dbReference type="PRINTS" id="PR00756">
    <property type="entry name" value="ALADIPTASE"/>
</dbReference>
<dbReference type="SUPFAM" id="SSF63737">
    <property type="entry name" value="Leukotriene A4 hydrolase N-terminal domain"/>
    <property type="match status" value="1"/>
</dbReference>
<dbReference type="SUPFAM" id="SSF55486">
    <property type="entry name" value="Metalloproteases ('zincins'), catalytic domain"/>
    <property type="match status" value="1"/>
</dbReference>
<dbReference type="PROSITE" id="PS00142">
    <property type="entry name" value="ZINC_PROTEASE"/>
    <property type="match status" value="1"/>
</dbReference>
<reference key="1">
    <citation type="journal article" date="1999" name="J. Biochem.">
        <title>Molecular cloning of adipocyte-derived leucine aminopeptidase highly related to placental leucine aminopeptidase/oxytocinase.</title>
        <authorList>
            <person name="Hattori A."/>
            <person name="Matsumoto H."/>
            <person name="Mizutani S."/>
            <person name="Tsujimoto M."/>
        </authorList>
    </citation>
    <scope>NUCLEOTIDE SEQUENCE [MRNA] (ISOFORM 1)</scope>
    <scope>VARIANT PRO-127</scope>
    <source>
        <tissue>White adipose tissue</tissue>
    </source>
</reference>
<reference key="2">
    <citation type="journal article" date="2001" name="J. Biochem.">
        <title>Genomic organization of the human adipocyte-derived leucine aminopeptidase gene and its relationship to the placental leucine aminopeptidase/oxytocinase gene.</title>
        <authorList>
            <person name="Hattori A."/>
            <person name="Matsumoto K."/>
            <person name="Mizutani S."/>
            <person name="Tsujimoto M."/>
        </authorList>
    </citation>
    <scope>NUCLEOTIDE SEQUENCE [MRNA] (ISOFORMS 1 AND 2)</scope>
    <scope>VARIANTS PRO-127; VAL-349; ARG-528; ASN-575; GLN-725 AND GLU-730</scope>
    <source>
        <tissue>Leukocyte</tissue>
    </source>
</reference>
<reference key="3">
    <citation type="submission" date="1999-09" db="EMBL/GenBank/DDBJ databases">
        <title>Molecular characterization of human aminopeptidase PILS.</title>
        <authorList>
            <person name="Schomburg L."/>
        </authorList>
    </citation>
    <scope>NUCLEOTIDE SEQUENCE [MRNA] (ISOFORM 1)</scope>
    <scope>VARIANTS ASP-346; ARG-528 AND GLU-730</scope>
</reference>
<reference key="4">
    <citation type="submission" date="2000-01" db="EMBL/GenBank/DDBJ databases">
        <title>Identification of an aminopeptidase regulator of type I tumor necrosis factor receptor shedding.</title>
        <authorList>
            <person name="Cui X."/>
            <person name="Alsaaty S."/>
            <person name="Lawrence M."/>
            <person name="Combs C.A."/>
            <person name="Rouhani F.N."/>
            <person name="Levine S.J."/>
        </authorList>
    </citation>
    <scope>NUCLEOTIDE SEQUENCE [MRNA] (ISOFORM 1)</scope>
</reference>
<reference key="5">
    <citation type="journal article" date="1998" name="DNA Res.">
        <title>Prediction of the coding sequences of unidentified human genes. IX. The complete sequences of 100 new cDNA clones from brain which can code for large proteins in vitro.</title>
        <authorList>
            <person name="Nagase T."/>
            <person name="Ishikawa K."/>
            <person name="Miyajima N."/>
            <person name="Tanaka A."/>
            <person name="Kotani H."/>
            <person name="Nomura N."/>
            <person name="Ohara O."/>
        </authorList>
    </citation>
    <scope>NUCLEOTIDE SEQUENCE [LARGE SCALE MRNA] (ISOFORM 2)</scope>
    <scope>VARIANTS PRO-127; VAL-349; ARG-528; ASN-575; GLN-725 AND GLU-730</scope>
    <source>
        <tissue>Brain</tissue>
    </source>
</reference>
<reference key="6">
    <citation type="journal article" date="2002" name="DNA Res.">
        <title>Construction of expression-ready cDNA clones for KIAA genes: manual curation of 330 KIAA cDNA clones.</title>
        <authorList>
            <person name="Nakajima D."/>
            <person name="Okazaki N."/>
            <person name="Yamakawa H."/>
            <person name="Kikuno R."/>
            <person name="Ohara O."/>
            <person name="Nagase T."/>
        </authorList>
    </citation>
    <scope>SEQUENCE REVISION</scope>
</reference>
<reference key="7">
    <citation type="journal article" date="2003" name="Genome Res.">
        <title>The secreted protein discovery initiative (SPDI), a large-scale effort to identify novel human secreted and transmembrane proteins: a bioinformatics assessment.</title>
        <authorList>
            <person name="Clark H.F."/>
            <person name="Gurney A.L."/>
            <person name="Abaya E."/>
            <person name="Baker K."/>
            <person name="Baldwin D.T."/>
            <person name="Brush J."/>
            <person name="Chen J."/>
            <person name="Chow B."/>
            <person name="Chui C."/>
            <person name="Crowley C."/>
            <person name="Currell B."/>
            <person name="Deuel B."/>
            <person name="Dowd P."/>
            <person name="Eaton D."/>
            <person name="Foster J.S."/>
            <person name="Grimaldi C."/>
            <person name="Gu Q."/>
            <person name="Hass P.E."/>
            <person name="Heldens S."/>
            <person name="Huang A."/>
            <person name="Kim H.S."/>
            <person name="Klimowski L."/>
            <person name="Jin Y."/>
            <person name="Johnson S."/>
            <person name="Lee J."/>
            <person name="Lewis L."/>
            <person name="Liao D."/>
            <person name="Mark M.R."/>
            <person name="Robbie E."/>
            <person name="Sanchez C."/>
            <person name="Schoenfeld J."/>
            <person name="Seshagiri S."/>
            <person name="Simmons L."/>
            <person name="Singh J."/>
            <person name="Smith V."/>
            <person name="Stinson J."/>
            <person name="Vagts A."/>
            <person name="Vandlen R.L."/>
            <person name="Watanabe C."/>
            <person name="Wieand D."/>
            <person name="Woods K."/>
            <person name="Xie M.-H."/>
            <person name="Yansura D.G."/>
            <person name="Yi S."/>
            <person name="Yu G."/>
            <person name="Yuan J."/>
            <person name="Zhang M."/>
            <person name="Zhang Z."/>
            <person name="Goddard A.D."/>
            <person name="Wood W.I."/>
            <person name="Godowski P.J."/>
            <person name="Gray A.M."/>
        </authorList>
    </citation>
    <scope>NUCLEOTIDE SEQUENCE [LARGE SCALE MRNA] (ISOFORM 1)</scope>
    <scope>VARIANTS PRO-127; VAL-349; ARG-528; ASN-575; GLN-725 AND GLU-730</scope>
</reference>
<reference key="8">
    <citation type="journal article" date="2004" name="Genome Res.">
        <title>The status, quality, and expansion of the NIH full-length cDNA project: the Mammalian Gene Collection (MGC).</title>
        <authorList>
            <consortium name="The MGC Project Team"/>
        </authorList>
    </citation>
    <scope>NUCLEOTIDE SEQUENCE [LARGE SCALE MRNA] (ISOFORM 1)</scope>
    <source>
        <tissue>Testis</tissue>
    </source>
</reference>
<reference key="9">
    <citation type="journal article" date="2000" name="J. Biochem.">
        <title>Characterization of recombinant human adipocyte-derived leucine aminopeptidase expressed in Chinese hamster ovary cells.</title>
        <authorList>
            <person name="Hattori A."/>
            <person name="Kitatani K."/>
            <person name="Matsumoto H."/>
            <person name="Miyazawa S."/>
            <person name="Rogi T."/>
            <person name="Tsuruoka N."/>
            <person name="Mizutani S."/>
            <person name="Natori Y."/>
            <person name="Tsujimoto M."/>
        </authorList>
    </citation>
    <scope>PROTEIN SEQUENCE OF 37-49</scope>
    <scope>CHARACTERIZATION</scope>
</reference>
<reference key="10">
    <citation type="journal article" date="2005" name="Nat. Immunol.">
        <title>Concerted peptide trimming by human ERAP1 and ERAP2 aminopeptidase complexes in the endoplasmic reticulum.</title>
        <authorList>
            <person name="Saveanu L."/>
            <person name="Carroll O."/>
            <person name="Lindo V."/>
            <person name="Del Val M."/>
            <person name="Lopez D."/>
            <person name="Lepelletier Y."/>
            <person name="Greer F."/>
            <person name="Schomburg L."/>
            <person name="Fruci D."/>
            <person name="Niedermann G."/>
            <person name="van Endert P.M."/>
        </authorList>
    </citation>
    <scope>FUNCTION</scope>
    <scope>SUBCELLULAR LOCATION</scope>
    <scope>SUBUNIT</scope>
    <scope>INDUCTION BY IFNG</scope>
</reference>
<reference key="11">
    <citation type="journal article" date="2005" name="Proc. Natl. Acad. Sci. U.S.A.">
        <title>The ER aminopeptidase, ERAP1, trims precursors to lengths of MHC class I peptides by a 'molecular ruler' mechanism.</title>
        <authorList>
            <person name="Chang S.-C."/>
            <person name="Momburg F."/>
            <person name="Bhutani N."/>
            <person name="Goldberg A.L."/>
        </authorList>
    </citation>
    <scope>FUNCTION</scope>
</reference>
<reference key="12">
    <citation type="journal article" date="2008" name="Biochem. Biophys. Res. Commun.">
        <title>An association between RBMX, a heterogeneous nuclear ribonucleoprotein, and ARTS-1 regulates extracellular TNFR1 release.</title>
        <authorList>
            <person name="Adamik B."/>
            <person name="Islam A."/>
            <person name="Rouhani F.N."/>
            <person name="Hawari F.I."/>
            <person name="Zhang J."/>
            <person name="Levine S.J."/>
        </authorList>
    </citation>
    <scope>INTERACTION WITH RBMX</scope>
</reference>
<reference key="13">
    <citation type="journal article" date="2009" name="J. Proteome Res.">
        <title>Glycoproteomics analysis of human liver tissue by combination of multiple enzyme digestion and hydrazide chemistry.</title>
        <authorList>
            <person name="Chen R."/>
            <person name="Jiang X."/>
            <person name="Sun D."/>
            <person name="Han G."/>
            <person name="Wang F."/>
            <person name="Ye M."/>
            <person name="Wang L."/>
            <person name="Zou H."/>
        </authorList>
    </citation>
    <scope>GLYCOSYLATION [LARGE SCALE ANALYSIS] AT ASN-414</scope>
    <source>
        <tissue>Liver</tissue>
    </source>
</reference>
<reference key="14">
    <citation type="journal article" date="2011" name="BMC Syst. Biol.">
        <title>Initial characterization of the human central proteome.</title>
        <authorList>
            <person name="Burkard T.R."/>
            <person name="Planyavsky M."/>
            <person name="Kaupe I."/>
            <person name="Breitwieser F.P."/>
            <person name="Buerckstuemmer T."/>
            <person name="Bennett K.L."/>
            <person name="Superti-Furga G."/>
            <person name="Colinge J."/>
        </authorList>
    </citation>
    <scope>IDENTIFICATION BY MASS SPECTROMETRY [LARGE SCALE ANALYSIS]</scope>
</reference>
<reference key="15">
    <citation type="journal article" date="2014" name="J. Proteomics">
        <title>An enzyme assisted RP-RPLC approach for in-depth analysis of human liver phosphoproteome.</title>
        <authorList>
            <person name="Bian Y."/>
            <person name="Song C."/>
            <person name="Cheng K."/>
            <person name="Dong M."/>
            <person name="Wang F."/>
            <person name="Huang J."/>
            <person name="Sun D."/>
            <person name="Wang L."/>
            <person name="Ye M."/>
            <person name="Zou H."/>
        </authorList>
    </citation>
    <scope>IDENTIFICATION BY MASS SPECTROMETRY [LARGE SCALE ANALYSIS]</scope>
    <source>
        <tissue>Liver</tissue>
    </source>
</reference>
<reference key="16">
    <citation type="submission" date="2010-05" db="PDB data bank">
        <title>Crystal structure of the soluble domain of human endoplasmic reticulum aminopeptidase 1 ERAP1.</title>
        <authorList>
            <consortium name="Structural genomics consortium (SGC)"/>
        </authorList>
    </citation>
    <scope>X-RAY CRYSTALLOGRAPHY (2.7 ANGSTROMS) OF 46-940 IN COMPLEX WITH ZINC IONS</scope>
    <scope>DISULFIDE BONDS</scope>
    <scope>GLYCOSYLATION AT ASN-70; ASN-154 AND ASN-414</scope>
</reference>
<reference key="17">
    <citation type="journal article" date="2011" name="Nat. Struct. Mol. Biol.">
        <title>Structural basis for antigenic peptide precursor processing by the endoplasmic reticulum aminopeptidase ERAP1.</title>
        <authorList>
            <person name="Nguyen T.T."/>
            <person name="Chang S.C."/>
            <person name="Evnouchidou I."/>
            <person name="York I.A."/>
            <person name="Zikos C."/>
            <person name="Rock K.L."/>
            <person name="Goldberg A.L."/>
            <person name="Stratikos E."/>
            <person name="Stern L.J."/>
        </authorList>
    </citation>
    <scope>X-RAY CRYSTALLOGRAPHY (2.95 ANGSTROMS) OF 37-939 IN COMPLEX WITH ZINC IONS AND BESTATIN</scope>
    <scope>FUNCTION</scope>
    <scope>DISULFIDE BONDS</scope>
    <scope>GLYCOSYLATION AT ASN-70; ASN-154 AND ASN-760</scope>
    <scope>ACTIVE SITE</scope>
    <scope>CATALYTIC ACTIVITY</scope>
    <scope>SUBUNIT</scope>
    <scope>MUTAGENESIS OF TYR-438</scope>
</reference>
<gene>
    <name type="primary">ERAP1</name>
    <name type="synonym">APPILS</name>
    <name type="synonym">ARTS1</name>
    <name type="synonym">KIAA0525</name>
    <name type="ORF">UNQ584/PRO1154</name>
</gene>
<feature type="chain" id="PRO_0000026751" description="Endoplasmic reticulum aminopeptidase 1">
    <location>
        <begin position="1"/>
        <end position="941"/>
    </location>
</feature>
<feature type="topological domain" description="Cytoplasmic" evidence="2">
    <location>
        <position position="1"/>
    </location>
</feature>
<feature type="transmembrane region" description="Helical; Signal-anchor for type II membrane protein" evidence="2">
    <location>
        <begin position="2"/>
        <end position="21"/>
    </location>
</feature>
<feature type="topological domain" description="Lumenal" evidence="2">
    <location>
        <begin position="22"/>
        <end position="941"/>
    </location>
</feature>
<feature type="active site" description="Proton acceptor" evidence="3">
    <location>
        <position position="354"/>
    </location>
</feature>
<feature type="binding site" evidence="1">
    <location>
        <position position="183"/>
    </location>
    <ligand>
        <name>substrate</name>
    </ligand>
</feature>
<feature type="binding site" evidence="1">
    <location>
        <begin position="317"/>
        <end position="321"/>
    </location>
    <ligand>
        <name>substrate</name>
    </ligand>
</feature>
<feature type="binding site">
    <location>
        <position position="353"/>
    </location>
    <ligand>
        <name>Zn(2+)</name>
        <dbReference type="ChEBI" id="CHEBI:29105"/>
        <note>catalytic</note>
    </ligand>
</feature>
<feature type="binding site">
    <location>
        <position position="357"/>
    </location>
    <ligand>
        <name>Zn(2+)</name>
        <dbReference type="ChEBI" id="CHEBI:29105"/>
        <note>catalytic</note>
    </ligand>
</feature>
<feature type="binding site">
    <location>
        <position position="376"/>
    </location>
    <ligand>
        <name>Zn(2+)</name>
        <dbReference type="ChEBI" id="CHEBI:29105"/>
        <note>catalytic</note>
    </ligand>
</feature>
<feature type="site" description="Transition state stabilizer" evidence="1">
    <location>
        <position position="438"/>
    </location>
</feature>
<feature type="glycosylation site" description="N-linked (GlcNAc...) asparagine" evidence="11 13">
    <location>
        <position position="70"/>
    </location>
</feature>
<feature type="glycosylation site" description="N-linked (GlcNAc...) asparagine" evidence="11 13">
    <location>
        <position position="154"/>
    </location>
</feature>
<feature type="glycosylation site" description="N-linked (GlcNAc...) asparagine" evidence="10 13">
    <location>
        <position position="414"/>
    </location>
</feature>
<feature type="glycosylation site" description="N-linked (GlcNAc...) asparagine" evidence="11">
    <location>
        <position position="760"/>
    </location>
</feature>
<feature type="glycosylation site" description="N-linked (GlcNAc...) asparagine" evidence="2">
    <location>
        <position position="901"/>
    </location>
</feature>
<feature type="disulfide bond">
    <location>
        <begin position="404"/>
        <end position="443"/>
    </location>
</feature>
<feature type="disulfide bond">
    <location>
        <begin position="736"/>
        <end position="743"/>
    </location>
</feature>
<feature type="splice variant" id="VSP_005450" description="In isoform 2." evidence="15 16">
    <original>RM</original>
    <variation>HDPEADATG</variation>
    <location>
        <begin position="940"/>
        <end position="941"/>
    </location>
</feature>
<feature type="sequence variant" id="VAR_046681" description="In dbSNP:rs3734016.">
    <original>E</original>
    <variation>K</variation>
    <location>
        <position position="56"/>
    </location>
</feature>
<feature type="sequence variant" id="VAR_012779" description="In dbSNP:rs26653." evidence="4 5 6 12">
    <original>R</original>
    <variation>P</variation>
    <location>
        <position position="127"/>
    </location>
</feature>
<feature type="sequence variant" id="VAR_012780" description="In dbSNP:rs26618.">
    <original>I</original>
    <variation>M</variation>
    <location>
        <position position="276"/>
    </location>
</feature>
<feature type="sequence variant" id="VAR_012781" description="In dbSNP:rs27895." evidence="14">
    <original>G</original>
    <variation>D</variation>
    <location>
        <position position="346"/>
    </location>
</feature>
<feature type="sequence variant" id="VAR_012782" description="In dbSNP:rs2287987." evidence="5 6 12">
    <original>M</original>
    <variation>V</variation>
    <location>
        <position position="349"/>
    </location>
</feature>
<feature type="sequence variant" id="VAR_012783" description="In dbSNP:rs30187." evidence="5 6 12 14">
    <original>K</original>
    <variation>R</variation>
    <location>
        <position position="528"/>
    </location>
</feature>
<feature type="sequence variant" id="VAR_046682" description="In dbSNP:rs6863093.">
    <original>D</original>
    <variation>G</variation>
    <location>
        <position position="575"/>
    </location>
</feature>
<feature type="sequence variant" id="VAR_021555" description="In dbSNP:rs10050860." evidence="5 6 12">
    <original>D</original>
    <variation>N</variation>
    <location>
        <position position="575"/>
    </location>
</feature>
<feature type="sequence variant" id="VAR_021556" description="In dbSNP:rs17482078." evidence="5 6 12">
    <original>R</original>
    <variation>Q</variation>
    <location>
        <position position="725"/>
    </location>
</feature>
<feature type="sequence variant" id="VAR_012784" description="In dbSNP:rs27044." evidence="5 6 12 14">
    <original>Q</original>
    <variation>E</variation>
    <location>
        <position position="730"/>
    </location>
</feature>
<feature type="mutagenesis site" description="Loss of enzyme activity." evidence="11">
    <original>Y</original>
    <variation>F</variation>
    <location>
        <position position="438"/>
    </location>
</feature>
<feature type="sequence conflict" description="In Ref. 1; AAF07395 and 2; AAK37777/AAK37778." evidence="17" ref="1 2">
    <original>T</original>
    <variation>I</variation>
    <location>
        <position position="12"/>
    </location>
</feature>
<feature type="sequence conflict" description="In Ref. 3; AAF20384." evidence="17" ref="3">
    <original>G</original>
    <variation>R</variation>
    <location>
        <position position="514"/>
    </location>
</feature>
<feature type="strand" evidence="24">
    <location>
        <begin position="56"/>
        <end position="70"/>
    </location>
</feature>
<feature type="turn" evidence="24">
    <location>
        <begin position="71"/>
        <end position="74"/>
    </location>
</feature>
<feature type="strand" evidence="24">
    <location>
        <begin position="75"/>
        <end position="88"/>
    </location>
</feature>
<feature type="strand" evidence="24">
    <location>
        <begin position="91"/>
        <end position="96"/>
    </location>
</feature>
<feature type="strand" evidence="24">
    <location>
        <begin position="101"/>
        <end position="114"/>
    </location>
</feature>
<feature type="strand" evidence="24">
    <location>
        <begin position="117"/>
        <end position="119"/>
    </location>
</feature>
<feature type="strand" evidence="24">
    <location>
        <begin position="121"/>
        <end position="125"/>
    </location>
</feature>
<feature type="turn" evidence="24">
    <location>
        <begin position="126"/>
        <end position="129"/>
    </location>
</feature>
<feature type="strand" evidence="24">
    <location>
        <begin position="130"/>
        <end position="134"/>
    </location>
</feature>
<feature type="strand" evidence="24">
    <location>
        <begin position="145"/>
        <end position="154"/>
    </location>
</feature>
<feature type="strand" evidence="24">
    <location>
        <begin position="156"/>
        <end position="168"/>
    </location>
</feature>
<feature type="strand" evidence="24">
    <location>
        <begin position="174"/>
        <end position="181"/>
    </location>
</feature>
<feature type="turn" evidence="24">
    <location>
        <begin position="183"/>
        <end position="186"/>
    </location>
</feature>
<feature type="helix" evidence="24">
    <location>
        <begin position="187"/>
        <end position="189"/>
    </location>
</feature>
<feature type="strand" evidence="24">
    <location>
        <begin position="201"/>
        <end position="209"/>
    </location>
</feature>
<feature type="strand" evidence="24">
    <location>
        <begin position="214"/>
        <end position="219"/>
    </location>
</feature>
<feature type="strand" evidence="24">
    <location>
        <begin position="221"/>
        <end position="228"/>
    </location>
</feature>
<feature type="strand" evidence="24">
    <location>
        <begin position="231"/>
        <end position="236"/>
    </location>
</feature>
<feature type="helix" evidence="24">
    <location>
        <begin position="244"/>
        <end position="246"/>
    </location>
</feature>
<feature type="strand" evidence="24">
    <location>
        <begin position="249"/>
        <end position="252"/>
    </location>
</feature>
<feature type="strand" evidence="24">
    <location>
        <begin position="255"/>
        <end position="260"/>
    </location>
</feature>
<feature type="strand" evidence="24">
    <location>
        <begin position="266"/>
        <end position="271"/>
    </location>
</feature>
<feature type="helix" evidence="24">
    <location>
        <begin position="273"/>
        <end position="278"/>
    </location>
</feature>
<feature type="helix" evidence="24">
    <location>
        <begin position="280"/>
        <end position="297"/>
    </location>
</feature>
<feature type="strand" evidence="24">
    <location>
        <begin position="303"/>
        <end position="313"/>
    </location>
</feature>
<feature type="strand" evidence="24">
    <location>
        <begin position="315"/>
        <end position="319"/>
    </location>
</feature>
<feature type="strand" evidence="24">
    <location>
        <begin position="324"/>
        <end position="328"/>
    </location>
</feature>
<feature type="helix" evidence="24">
    <location>
        <begin position="329"/>
        <end position="332"/>
    </location>
</feature>
<feature type="turn" evidence="24">
    <location>
        <begin position="336"/>
        <end position="338"/>
    </location>
</feature>
<feature type="helix" evidence="24">
    <location>
        <begin position="341"/>
        <end position="356"/>
    </location>
</feature>
<feature type="turn" evidence="24">
    <location>
        <begin position="357"/>
        <end position="359"/>
    </location>
</feature>
<feature type="turn" evidence="24">
    <location>
        <begin position="361"/>
        <end position="363"/>
    </location>
</feature>
<feature type="strand" evidence="24">
    <location>
        <begin position="364"/>
        <end position="368"/>
    </location>
</feature>
<feature type="helix" evidence="24">
    <location>
        <begin position="369"/>
        <end position="372"/>
    </location>
</feature>
<feature type="helix" evidence="24">
    <location>
        <begin position="373"/>
        <end position="390"/>
    </location>
</feature>
<feature type="helix" evidence="24">
    <location>
        <begin position="392"/>
        <end position="394"/>
    </location>
</feature>
<feature type="helix" evidence="24">
    <location>
        <begin position="396"/>
        <end position="400"/>
    </location>
</feature>
<feature type="helix" evidence="24">
    <location>
        <begin position="401"/>
        <end position="411"/>
    </location>
</feature>
<feature type="strand" evidence="21">
    <location>
        <begin position="413"/>
        <end position="415"/>
    </location>
</feature>
<feature type="helix" evidence="24">
    <location>
        <begin position="426"/>
        <end position="431"/>
    </location>
</feature>
<feature type="helix" evidence="24">
    <location>
        <begin position="435"/>
        <end position="452"/>
    </location>
</feature>
<feature type="helix" evidence="24">
    <location>
        <begin position="454"/>
        <end position="467"/>
    </location>
</feature>
<feature type="turn" evidence="24">
    <location>
        <begin position="468"/>
        <end position="470"/>
    </location>
</feature>
<feature type="strand" evidence="24">
    <location>
        <begin position="471"/>
        <end position="473"/>
    </location>
</feature>
<feature type="helix" evidence="24">
    <location>
        <begin position="475"/>
        <end position="482"/>
    </location>
</feature>
<feature type="helix" evidence="24">
    <location>
        <begin position="518"/>
        <end position="525"/>
    </location>
</feature>
<feature type="strand" evidence="24">
    <location>
        <begin position="529"/>
        <end position="538"/>
    </location>
</feature>
<feature type="strand" evidence="24">
    <location>
        <begin position="541"/>
        <end position="549"/>
    </location>
</feature>
<feature type="strand" evidence="24">
    <location>
        <begin position="565"/>
        <end position="571"/>
    </location>
</feature>
<feature type="strand" evidence="24">
    <location>
        <begin position="574"/>
        <end position="582"/>
    </location>
</feature>
<feature type="strand" evidence="24">
    <location>
        <begin position="584"/>
        <end position="590"/>
    </location>
</feature>
<feature type="strand" evidence="24">
    <location>
        <begin position="598"/>
        <end position="601"/>
    </location>
</feature>
<feature type="helix" evidence="24">
    <location>
        <begin position="602"/>
        <end position="604"/>
    </location>
</feature>
<feature type="strand" evidence="24">
    <location>
        <begin position="609"/>
        <end position="612"/>
    </location>
</feature>
<feature type="turn" evidence="24">
    <location>
        <begin position="613"/>
        <end position="615"/>
    </location>
</feature>
<feature type="helix" evidence="24">
    <location>
        <begin position="616"/>
        <end position="627"/>
    </location>
</feature>
<feature type="helix" evidence="24">
    <location>
        <begin position="628"/>
        <end position="630"/>
    </location>
</feature>
<feature type="helix" evidence="24">
    <location>
        <begin position="633"/>
        <end position="648"/>
    </location>
</feature>
<feature type="strand" evidence="23">
    <location>
        <begin position="650"/>
        <end position="652"/>
    </location>
</feature>
<feature type="helix" evidence="24">
    <location>
        <begin position="654"/>
        <end position="661"/>
    </location>
</feature>
<feature type="helix" evidence="24">
    <location>
        <begin position="662"/>
        <end position="666"/>
    </location>
</feature>
<feature type="helix" evidence="24">
    <location>
        <begin position="670"/>
        <end position="687"/>
    </location>
</feature>
<feature type="turn" evidence="20">
    <location>
        <begin position="688"/>
        <end position="691"/>
    </location>
</feature>
<feature type="helix" evidence="24">
    <location>
        <begin position="693"/>
        <end position="713"/>
    </location>
</feature>
<feature type="strand" evidence="22">
    <location>
        <begin position="716"/>
        <end position="718"/>
    </location>
</feature>
<feature type="helix" evidence="24">
    <location>
        <begin position="722"/>
        <end position="737"/>
    </location>
</feature>
<feature type="helix" evidence="24">
    <location>
        <begin position="741"/>
        <end position="756"/>
    </location>
</feature>
<feature type="turn" evidence="24">
    <location>
        <begin position="757"/>
        <end position="761"/>
    </location>
</feature>
<feature type="helix" evidence="24">
    <location>
        <begin position="765"/>
        <end position="775"/>
    </location>
</feature>
<feature type="helix" evidence="24">
    <location>
        <begin position="779"/>
        <end position="789"/>
    </location>
</feature>
<feature type="helix" evidence="24">
    <location>
        <begin position="795"/>
        <end position="805"/>
    </location>
</feature>
<feature type="helix" evidence="24">
    <location>
        <begin position="811"/>
        <end position="823"/>
    </location>
</feature>
<feature type="strand" evidence="24">
    <location>
        <begin position="825"/>
        <end position="827"/>
    </location>
</feature>
<feature type="helix" evidence="24">
    <location>
        <begin position="829"/>
        <end position="831"/>
    </location>
</feature>
<feature type="helix" evidence="24">
    <location>
        <begin position="832"/>
        <end position="840"/>
    </location>
</feature>
<feature type="turn" evidence="24">
    <location>
        <begin position="843"/>
        <end position="845"/>
    </location>
</feature>
<feature type="helix" evidence="24">
    <location>
        <begin position="846"/>
        <end position="855"/>
    </location>
</feature>
<feature type="helix" evidence="24">
    <location>
        <begin position="857"/>
        <end position="864"/>
    </location>
</feature>
<feature type="strand" evidence="20">
    <location>
        <begin position="866"/>
        <end position="868"/>
    </location>
</feature>
<feature type="helix" evidence="24">
    <location>
        <begin position="869"/>
        <end position="879"/>
    </location>
</feature>
<feature type="helix" evidence="24">
    <location>
        <begin position="885"/>
        <end position="896"/>
    </location>
</feature>
<feature type="helix" evidence="24">
    <location>
        <begin position="897"/>
        <end position="901"/>
    </location>
</feature>
<feature type="turn" evidence="24">
    <location>
        <begin position="902"/>
        <end position="904"/>
    </location>
</feature>
<feature type="helix" evidence="24">
    <location>
        <begin position="906"/>
        <end position="935"/>
    </location>
</feature>
<feature type="turn" evidence="19">
    <location>
        <begin position="936"/>
        <end position="939"/>
    </location>
</feature>
<comment type="function">
    <text evidence="7 8 11">Aminopeptidase that plays a central role in peptide trimming, a step required for the generation of most HLA class I-binding peptides. Peptide trimming is essential to customize longer precursor peptides to fit them to the correct length required for presentation on MHC class I molecules. Strongly prefers substrates 9-16 residues long. Rapidly degrades 13-mer to a 9-mer and then stops. Preferentially hydrolyzes the residue Leu and peptides with a hydrophobic C-terminus, while it has weak activity toward peptides with charged C-terminus. May play a role in the inactivation of peptide hormones. May be involved in the regulation of blood pressure through the inactivation of angiotensin II and/or the generation of bradykinin in the kidney.</text>
</comment>
<comment type="cofactor">
    <cofactor>
        <name>Zn(2+)</name>
        <dbReference type="ChEBI" id="CHEBI:29105"/>
    </cofactor>
    <text>Binds 1 zinc ion per subunit.</text>
</comment>
<comment type="subunit">
    <text evidence="7 9 11 13">Monomer. May also exist as a heterodimer; with ERAP2. Interacts with RBMX.</text>
</comment>
<comment type="interaction">
    <interactant intactId="EBI-299412">
        <id>Q9NZ08</id>
    </interactant>
    <interactant intactId="EBI-2834295">
        <id>Q6P179</id>
        <label>ERAP2</label>
    </interactant>
    <organismsDiffer>false</organismsDiffer>
    <experiments>5</experiments>
</comment>
<comment type="subcellular location">
    <subcellularLocation>
        <location evidence="18">Endoplasmic reticulum membrane</location>
        <topology evidence="18">Single-pass type II membrane protein</topology>
    </subcellularLocation>
</comment>
<comment type="alternative products">
    <event type="alternative splicing"/>
    <isoform>
        <id>Q9NZ08-1</id>
        <name>1</name>
        <sequence type="displayed"/>
    </isoform>
    <isoform>
        <id>Q9NZ08-2</id>
        <name>2</name>
        <sequence type="described" ref="VSP_005450"/>
    </isoform>
</comment>
<comment type="tissue specificity">
    <text>Ubiquitous.</text>
</comment>
<comment type="induction">
    <text evidence="7">By IFNG/IFN-gamma.</text>
</comment>
<comment type="PTM">
    <text evidence="10 11 13">N-glycosylated.</text>
</comment>
<comment type="similarity">
    <text evidence="17">Belongs to the peptidase M1 family.</text>
</comment>
<comment type="caution">
    <text evidence="17">It is uncertain whether Met-1 or Met-13 is the initiator.</text>
</comment>
<comment type="sequence caution" evidence="17">
    <conflict type="erroneous initiation">
        <sequence resource="EMBL-CDS" id="BAA25451"/>
    </conflict>
</comment>
<name>ERAP1_HUMAN</name>
<keyword id="KW-0002">3D-structure</keyword>
<keyword id="KW-1064">Adaptive immunity</keyword>
<keyword id="KW-0025">Alternative splicing</keyword>
<keyword id="KW-0031">Aminopeptidase</keyword>
<keyword id="KW-0903">Direct protein sequencing</keyword>
<keyword id="KW-1015">Disulfide bond</keyword>
<keyword id="KW-0256">Endoplasmic reticulum</keyword>
<keyword id="KW-0325">Glycoprotein</keyword>
<keyword id="KW-0378">Hydrolase</keyword>
<keyword id="KW-0391">Immunity</keyword>
<keyword id="KW-0472">Membrane</keyword>
<keyword id="KW-0479">Metal-binding</keyword>
<keyword id="KW-0482">Metalloprotease</keyword>
<keyword id="KW-0645">Protease</keyword>
<keyword id="KW-1267">Proteomics identification</keyword>
<keyword id="KW-1185">Reference proteome</keyword>
<keyword id="KW-0735">Signal-anchor</keyword>
<keyword id="KW-0812">Transmembrane</keyword>
<keyword id="KW-1133">Transmembrane helix</keyword>
<keyword id="KW-0862">Zinc</keyword>
<accession>Q9NZ08</accession>
<accession>O60278</accession>
<accession>Q6UWY6</accession>
<accession>Q8NEL4</accession>
<accession>Q8TAD0</accession>
<accession>Q9UHF8</accession>
<accession>Q9UKY2</accession>
<evidence type="ECO:0000250" key="1"/>
<evidence type="ECO:0000255" key="2"/>
<evidence type="ECO:0000255" key="3">
    <source>
        <dbReference type="PROSITE-ProRule" id="PRU10095"/>
    </source>
</evidence>
<evidence type="ECO:0000269" key="4">
    <source>
    </source>
</evidence>
<evidence type="ECO:0000269" key="5">
    <source>
    </source>
</evidence>
<evidence type="ECO:0000269" key="6">
    <source>
    </source>
</evidence>
<evidence type="ECO:0000269" key="7">
    <source>
    </source>
</evidence>
<evidence type="ECO:0000269" key="8">
    <source>
    </source>
</evidence>
<evidence type="ECO:0000269" key="9">
    <source>
    </source>
</evidence>
<evidence type="ECO:0000269" key="10">
    <source>
    </source>
</evidence>
<evidence type="ECO:0000269" key="11">
    <source>
    </source>
</evidence>
<evidence type="ECO:0000269" key="12">
    <source>
    </source>
</evidence>
<evidence type="ECO:0000269" key="13">
    <source ref="16"/>
</evidence>
<evidence type="ECO:0000269" key="14">
    <source ref="3"/>
</evidence>
<evidence type="ECO:0000303" key="15">
    <source>
    </source>
</evidence>
<evidence type="ECO:0000303" key="16">
    <source>
    </source>
</evidence>
<evidence type="ECO:0000305" key="17"/>
<evidence type="ECO:0000305" key="18">
    <source>
    </source>
</evidence>
<evidence type="ECO:0007829" key="19">
    <source>
        <dbReference type="PDB" id="2YD0"/>
    </source>
</evidence>
<evidence type="ECO:0007829" key="20">
    <source>
        <dbReference type="PDB" id="5J5E"/>
    </source>
</evidence>
<evidence type="ECO:0007829" key="21">
    <source>
        <dbReference type="PDB" id="6MGQ"/>
    </source>
</evidence>
<evidence type="ECO:0007829" key="22">
    <source>
        <dbReference type="PDB" id="6Q4R"/>
    </source>
</evidence>
<evidence type="ECO:0007829" key="23">
    <source>
        <dbReference type="PDB" id="7MWC"/>
    </source>
</evidence>
<evidence type="ECO:0007829" key="24">
    <source>
        <dbReference type="PDB" id="7Z28"/>
    </source>
</evidence>